<protein>
    <recommendedName>
        <fullName evidence="1">UDP-3-O-acylglucosamine N-acyltransferase</fullName>
        <ecNumber evidence="1">2.3.1.191</ecNumber>
    </recommendedName>
</protein>
<reference key="1">
    <citation type="submission" date="2007-09" db="EMBL/GenBank/DDBJ databases">
        <title>Complete genome sequence of Rickettsia canadensis.</title>
        <authorList>
            <person name="Madan A."/>
            <person name="Fahey J."/>
            <person name="Helton E."/>
            <person name="Ketteman M."/>
            <person name="Madan A."/>
            <person name="Rodrigues S."/>
            <person name="Sanchez A."/>
            <person name="Whiting M."/>
            <person name="Dasch G."/>
            <person name="Eremeeva M."/>
        </authorList>
    </citation>
    <scope>NUCLEOTIDE SEQUENCE [LARGE SCALE GENOMIC DNA]</scope>
    <source>
        <strain>McKiel</strain>
    </source>
</reference>
<dbReference type="EC" id="2.3.1.191" evidence="1"/>
<dbReference type="EMBL" id="CP000409">
    <property type="protein sequence ID" value="ABV72961.1"/>
    <property type="molecule type" value="Genomic_DNA"/>
</dbReference>
<dbReference type="RefSeq" id="WP_012148162.1">
    <property type="nucleotide sequence ID" value="NC_009879.1"/>
</dbReference>
<dbReference type="SMR" id="A8EX78"/>
<dbReference type="STRING" id="293613.A1E_00040"/>
<dbReference type="KEGG" id="rcm:A1E_00040"/>
<dbReference type="eggNOG" id="COG1044">
    <property type="taxonomic scope" value="Bacteria"/>
</dbReference>
<dbReference type="HOGENOM" id="CLU_049865_0_0_5"/>
<dbReference type="UniPathway" id="UPA00973"/>
<dbReference type="Proteomes" id="UP000007056">
    <property type="component" value="Chromosome"/>
</dbReference>
<dbReference type="GO" id="GO:0016020">
    <property type="term" value="C:membrane"/>
    <property type="evidence" value="ECO:0007669"/>
    <property type="project" value="GOC"/>
</dbReference>
<dbReference type="GO" id="GO:0016410">
    <property type="term" value="F:N-acyltransferase activity"/>
    <property type="evidence" value="ECO:0007669"/>
    <property type="project" value="InterPro"/>
</dbReference>
<dbReference type="GO" id="GO:0009245">
    <property type="term" value="P:lipid A biosynthetic process"/>
    <property type="evidence" value="ECO:0007669"/>
    <property type="project" value="UniProtKB-UniRule"/>
</dbReference>
<dbReference type="CDD" id="cd03352">
    <property type="entry name" value="LbH_LpxD"/>
    <property type="match status" value="1"/>
</dbReference>
<dbReference type="Gene3D" id="2.160.10.10">
    <property type="entry name" value="Hexapeptide repeat proteins"/>
    <property type="match status" value="1"/>
</dbReference>
<dbReference type="Gene3D" id="3.40.1390.10">
    <property type="entry name" value="MurE/MurF, N-terminal domain"/>
    <property type="match status" value="1"/>
</dbReference>
<dbReference type="HAMAP" id="MF_00523">
    <property type="entry name" value="LpxD"/>
    <property type="match status" value="1"/>
</dbReference>
<dbReference type="InterPro" id="IPR001451">
    <property type="entry name" value="Hexapep"/>
</dbReference>
<dbReference type="InterPro" id="IPR018357">
    <property type="entry name" value="Hexapep_transf_CS"/>
</dbReference>
<dbReference type="InterPro" id="IPR007691">
    <property type="entry name" value="LpxD"/>
</dbReference>
<dbReference type="InterPro" id="IPR011004">
    <property type="entry name" value="Trimer_LpxA-like_sf"/>
</dbReference>
<dbReference type="InterPro" id="IPR020573">
    <property type="entry name" value="UDP_GlcNAc_AcTrfase_non-rep"/>
</dbReference>
<dbReference type="NCBIfam" id="TIGR01853">
    <property type="entry name" value="lipid_A_lpxD"/>
    <property type="match status" value="1"/>
</dbReference>
<dbReference type="NCBIfam" id="NF002060">
    <property type="entry name" value="PRK00892.1"/>
    <property type="match status" value="1"/>
</dbReference>
<dbReference type="PANTHER" id="PTHR43378">
    <property type="entry name" value="UDP-3-O-ACYLGLUCOSAMINE N-ACYLTRANSFERASE"/>
    <property type="match status" value="1"/>
</dbReference>
<dbReference type="PANTHER" id="PTHR43378:SF2">
    <property type="entry name" value="UDP-3-O-ACYLGLUCOSAMINE N-ACYLTRANSFERASE 1, MITOCHONDRIAL-RELATED"/>
    <property type="match status" value="1"/>
</dbReference>
<dbReference type="Pfam" id="PF00132">
    <property type="entry name" value="Hexapep"/>
    <property type="match status" value="1"/>
</dbReference>
<dbReference type="Pfam" id="PF14602">
    <property type="entry name" value="Hexapep_2"/>
    <property type="match status" value="1"/>
</dbReference>
<dbReference type="Pfam" id="PF04613">
    <property type="entry name" value="LpxD"/>
    <property type="match status" value="1"/>
</dbReference>
<dbReference type="SUPFAM" id="SSF51161">
    <property type="entry name" value="Trimeric LpxA-like enzymes"/>
    <property type="match status" value="1"/>
</dbReference>
<dbReference type="PROSITE" id="PS00101">
    <property type="entry name" value="HEXAPEP_TRANSFERASES"/>
    <property type="match status" value="3"/>
</dbReference>
<comment type="function">
    <text evidence="1">Catalyzes the N-acylation of UDP-3-O-acylglucosamine using 3-hydroxyacyl-ACP as the acyl donor. Is involved in the biosynthesis of lipid A, a phosphorylated glycolipid that anchors the lipopolysaccharide to the outer membrane of the cell.</text>
</comment>
<comment type="catalytic activity">
    <reaction evidence="1">
        <text>a UDP-3-O-[(3R)-3-hydroxyacyl]-alpha-D-glucosamine + a (3R)-hydroxyacyl-[ACP] = a UDP-2-N,3-O-bis[(3R)-3-hydroxyacyl]-alpha-D-glucosamine + holo-[ACP] + H(+)</text>
        <dbReference type="Rhea" id="RHEA:53836"/>
        <dbReference type="Rhea" id="RHEA-COMP:9685"/>
        <dbReference type="Rhea" id="RHEA-COMP:9945"/>
        <dbReference type="ChEBI" id="CHEBI:15378"/>
        <dbReference type="ChEBI" id="CHEBI:64479"/>
        <dbReference type="ChEBI" id="CHEBI:78827"/>
        <dbReference type="ChEBI" id="CHEBI:137740"/>
        <dbReference type="ChEBI" id="CHEBI:137748"/>
        <dbReference type="EC" id="2.3.1.191"/>
    </reaction>
</comment>
<comment type="pathway">
    <text evidence="1">Bacterial outer membrane biogenesis; LPS lipid A biosynthesis.</text>
</comment>
<comment type="subunit">
    <text evidence="1">Homotrimer.</text>
</comment>
<comment type="similarity">
    <text evidence="1">Belongs to the transferase hexapeptide repeat family. LpxD subfamily.</text>
</comment>
<name>LPXD_RICCK</name>
<feature type="chain" id="PRO_1000050958" description="UDP-3-O-acylglucosamine N-acyltransferase">
    <location>
        <begin position="1"/>
        <end position="342"/>
    </location>
</feature>
<feature type="active site" description="Proton acceptor" evidence="1">
    <location>
        <position position="253"/>
    </location>
</feature>
<evidence type="ECO:0000255" key="1">
    <source>
        <dbReference type="HAMAP-Rule" id="MF_00523"/>
    </source>
</evidence>
<keyword id="KW-0012">Acyltransferase</keyword>
<keyword id="KW-0441">Lipid A biosynthesis</keyword>
<keyword id="KW-0444">Lipid biosynthesis</keyword>
<keyword id="KW-0443">Lipid metabolism</keyword>
<keyword id="KW-0677">Repeat</keyword>
<keyword id="KW-0808">Transferase</keyword>
<organism>
    <name type="scientific">Rickettsia canadensis (strain McKiel)</name>
    <dbReference type="NCBI Taxonomy" id="293613"/>
    <lineage>
        <taxon>Bacteria</taxon>
        <taxon>Pseudomonadati</taxon>
        <taxon>Pseudomonadota</taxon>
        <taxon>Alphaproteobacteria</taxon>
        <taxon>Rickettsiales</taxon>
        <taxon>Rickettsiaceae</taxon>
        <taxon>Rickettsieae</taxon>
        <taxon>Rickettsia</taxon>
        <taxon>belli group</taxon>
    </lineage>
</organism>
<sequence length="342" mass="36897">MASSNFYKNLGPRKLTTIIDFLHDIIEHPKIYEDIVIHDIKILQEASRNDISFLSNTKYSEFLKTTNAAACIVPKNFKGEVNPNTILIHAENSYFAYGKLIDFFYAPIKSYPAKIMKSAIVAASAIIGKNCYIGHNVVIEDDVIIGDNSIIEAGSFIGRGVNLGRNARIEQHVSINYAIIGDDVVILTGAKIGQDGFGFSTEKGVHHQIFHTGIVKIGNNVKIGANTTIDRGSLQDTIIEDLCCIDNLVQIGHGVKIGKGSIIIAQVGIAGSSTIGKYCALGGQVGIAGHLNIGDQVQVAAQSGVAQNIEAGKIVGGSPAVHIMNWHRQSIIMKQLIKKRPK</sequence>
<accession>A8EX78</accession>
<gene>
    <name evidence="1" type="primary">lpxD</name>
    <name type="ordered locus">A1E_00040</name>
</gene>
<proteinExistence type="inferred from homology"/>